<name>SYV_OCEIH</name>
<keyword id="KW-0030">Aminoacyl-tRNA synthetase</keyword>
<keyword id="KW-0067">ATP-binding</keyword>
<keyword id="KW-0175">Coiled coil</keyword>
<keyword id="KW-0963">Cytoplasm</keyword>
<keyword id="KW-0436">Ligase</keyword>
<keyword id="KW-0547">Nucleotide-binding</keyword>
<keyword id="KW-0648">Protein biosynthesis</keyword>
<keyword id="KW-1185">Reference proteome</keyword>
<evidence type="ECO:0000255" key="1">
    <source>
        <dbReference type="HAMAP-Rule" id="MF_02004"/>
    </source>
</evidence>
<reference key="1">
    <citation type="journal article" date="2002" name="Nucleic Acids Res.">
        <title>Genome sequence of Oceanobacillus iheyensis isolated from the Iheya Ridge and its unexpected adaptive capabilities to extreme environments.</title>
        <authorList>
            <person name="Takami H."/>
            <person name="Takaki Y."/>
            <person name="Uchiyama I."/>
        </authorList>
    </citation>
    <scope>NUCLEOTIDE SEQUENCE [LARGE SCALE GENOMIC DNA]</scope>
    <source>
        <strain>DSM 14371 / CIP 107618 / JCM 11309 / KCTC 3954 / HTE831</strain>
    </source>
</reference>
<comment type="function">
    <text evidence="1">Catalyzes the attachment of valine to tRNA(Val). As ValRS can inadvertently accommodate and process structurally similar amino acids such as threonine, to avoid such errors, it has a 'posttransfer' editing activity that hydrolyzes mischarged Thr-tRNA(Val) in a tRNA-dependent manner.</text>
</comment>
<comment type="catalytic activity">
    <reaction evidence="1">
        <text>tRNA(Val) + L-valine + ATP = L-valyl-tRNA(Val) + AMP + diphosphate</text>
        <dbReference type="Rhea" id="RHEA:10704"/>
        <dbReference type="Rhea" id="RHEA-COMP:9672"/>
        <dbReference type="Rhea" id="RHEA-COMP:9708"/>
        <dbReference type="ChEBI" id="CHEBI:30616"/>
        <dbReference type="ChEBI" id="CHEBI:33019"/>
        <dbReference type="ChEBI" id="CHEBI:57762"/>
        <dbReference type="ChEBI" id="CHEBI:78442"/>
        <dbReference type="ChEBI" id="CHEBI:78537"/>
        <dbReference type="ChEBI" id="CHEBI:456215"/>
        <dbReference type="EC" id="6.1.1.9"/>
    </reaction>
</comment>
<comment type="subunit">
    <text evidence="1">Monomer.</text>
</comment>
<comment type="subcellular location">
    <subcellularLocation>
        <location evidence="1">Cytoplasm</location>
    </subcellularLocation>
</comment>
<comment type="domain">
    <text evidence="1">ValRS has two distinct active sites: one for aminoacylation and one for editing. The misactivated threonine is translocated from the active site to the editing site.</text>
</comment>
<comment type="domain">
    <text evidence="1">The C-terminal coiled-coil domain is crucial for aminoacylation activity.</text>
</comment>
<comment type="similarity">
    <text evidence="1">Belongs to the class-I aminoacyl-tRNA synthetase family. ValS type 1 subfamily.</text>
</comment>
<protein>
    <recommendedName>
        <fullName evidence="1">Valine--tRNA ligase</fullName>
        <ecNumber evidence="1">6.1.1.9</ecNumber>
    </recommendedName>
    <alternativeName>
        <fullName evidence="1">Valyl-tRNA synthetase</fullName>
        <shortName evidence="1">ValRS</shortName>
    </alternativeName>
</protein>
<proteinExistence type="inferred from homology"/>
<sequence length="883" mass="103087">MEQDKENKQSLPSKYNPKEVEEGRYQFWLDGKFFEATGDPDKEPYSIVIPPPNVTGRLHLGHAWDTSMQDTITRMKRMQGYDVLWLPGMDHAGIATQAKVEARLKESGTNRYELGREKFLEKAWEWKEEYAAFIRSQWEKLGLGLDYSRERFTLDEGLSDAVREVFVKLYEKGLIYRGEYIINWDPSTKTALSDIEVIYEEIQGKFYHMRYPIKGSDETIEIATTRPETMLGDTAVAVHPKDERYQHLIGKTVILPIVGREIEIVADDYVDMELGSGAVKITPAHDPNDFEIGNRHQLERILVMNEDGSMNENAGKYQGLDRFECRKQIVKDLKEQGVMFNIEERTHQVGHSERSGAVVEPYLSTQWFVKMDPLAKSALDMQADADEKVNFVPDRFERTYFNWMDNIRDWCISRQLWWGHRIPAWYHKETKEIYVGKEAPADIENWEQDEDVLDTWFSSALWPFSTMGWPNEDSADLKRYFPTNVLVTGYDIIFFWVSRMIFQSKEFMNEKPFEDTLLHGLIRDADGRKMSKSLGNGVDPMDVIEKYGADSLRYFLMTGSTPGQDLRFHWEKVESTWNFANKVWNASRFSIMNMEGFTYEDIDLTGELSLPDRWILARLNETIEQVTRNSNKYEFGEAGRHLYNFIWDEFCDWYIEMAKLSLYGEDENKKKTTRSVLAHVLDQTMRMLHPFMPFITEEIWQQLPHEGPSITVSKWPEVNSEFDNPQAVQEMQRLVSIIRSVRNSRAEVDTPMSKQIKMLIKTENEQLTAELEKNRDYLERFCNPSELSISTVIEAPDKAMTSVVTGAEIFLPLEGLIDFDKEIKRLENELAKWTKEVERVQKKLSNQGFVSKAPESVVEEEKRKEKDYLDKQAKVKTRLSELK</sequence>
<organism>
    <name type="scientific">Oceanobacillus iheyensis (strain DSM 14371 / CIP 107618 / JCM 11309 / KCTC 3954 / HTE831)</name>
    <dbReference type="NCBI Taxonomy" id="221109"/>
    <lineage>
        <taxon>Bacteria</taxon>
        <taxon>Bacillati</taxon>
        <taxon>Bacillota</taxon>
        <taxon>Bacilli</taxon>
        <taxon>Bacillales</taxon>
        <taxon>Bacillaceae</taxon>
        <taxon>Oceanobacillus</taxon>
    </lineage>
</organism>
<dbReference type="EC" id="6.1.1.9" evidence="1"/>
<dbReference type="EMBL" id="BA000028">
    <property type="protein sequence ID" value="BAC14017.1"/>
    <property type="molecule type" value="Genomic_DNA"/>
</dbReference>
<dbReference type="RefSeq" id="WP_011066456.1">
    <property type="nucleotide sequence ID" value="NC_004193.1"/>
</dbReference>
<dbReference type="SMR" id="Q8EPN2"/>
<dbReference type="STRING" id="221109.gene:10734307"/>
<dbReference type="KEGG" id="oih:OB2061"/>
<dbReference type="eggNOG" id="COG0525">
    <property type="taxonomic scope" value="Bacteria"/>
</dbReference>
<dbReference type="HOGENOM" id="CLU_001493_0_2_9"/>
<dbReference type="OrthoDB" id="9810365at2"/>
<dbReference type="PhylomeDB" id="Q8EPN2"/>
<dbReference type="Proteomes" id="UP000000822">
    <property type="component" value="Chromosome"/>
</dbReference>
<dbReference type="GO" id="GO:0005829">
    <property type="term" value="C:cytosol"/>
    <property type="evidence" value="ECO:0007669"/>
    <property type="project" value="TreeGrafter"/>
</dbReference>
<dbReference type="GO" id="GO:0002161">
    <property type="term" value="F:aminoacyl-tRNA deacylase activity"/>
    <property type="evidence" value="ECO:0007669"/>
    <property type="project" value="InterPro"/>
</dbReference>
<dbReference type="GO" id="GO:0005524">
    <property type="term" value="F:ATP binding"/>
    <property type="evidence" value="ECO:0007669"/>
    <property type="project" value="UniProtKB-UniRule"/>
</dbReference>
<dbReference type="GO" id="GO:0004832">
    <property type="term" value="F:valine-tRNA ligase activity"/>
    <property type="evidence" value="ECO:0007669"/>
    <property type="project" value="UniProtKB-UniRule"/>
</dbReference>
<dbReference type="GO" id="GO:0006438">
    <property type="term" value="P:valyl-tRNA aminoacylation"/>
    <property type="evidence" value="ECO:0007669"/>
    <property type="project" value="UniProtKB-UniRule"/>
</dbReference>
<dbReference type="CDD" id="cd07962">
    <property type="entry name" value="Anticodon_Ia_Val"/>
    <property type="match status" value="1"/>
</dbReference>
<dbReference type="CDD" id="cd00817">
    <property type="entry name" value="ValRS_core"/>
    <property type="match status" value="1"/>
</dbReference>
<dbReference type="FunFam" id="1.10.287.380:FF:000001">
    <property type="entry name" value="Valine--tRNA ligase"/>
    <property type="match status" value="1"/>
</dbReference>
<dbReference type="FunFam" id="1.10.730.10:FF:000014">
    <property type="entry name" value="Valine--tRNA ligase"/>
    <property type="match status" value="1"/>
</dbReference>
<dbReference type="FunFam" id="3.40.50.620:FF:000032">
    <property type="entry name" value="Valine--tRNA ligase"/>
    <property type="match status" value="1"/>
</dbReference>
<dbReference type="FunFam" id="3.40.50.620:FF:000098">
    <property type="entry name" value="Valine--tRNA ligase"/>
    <property type="match status" value="1"/>
</dbReference>
<dbReference type="FunFam" id="3.90.740.10:FF:000005">
    <property type="entry name" value="Valine--tRNA ligase, mitochondrial"/>
    <property type="match status" value="1"/>
</dbReference>
<dbReference type="Gene3D" id="3.40.50.620">
    <property type="entry name" value="HUPs"/>
    <property type="match status" value="2"/>
</dbReference>
<dbReference type="Gene3D" id="1.10.730.10">
    <property type="entry name" value="Isoleucyl-tRNA Synthetase, Domain 1"/>
    <property type="match status" value="1"/>
</dbReference>
<dbReference type="Gene3D" id="1.10.287.380">
    <property type="entry name" value="Valyl-tRNA synthetase, C-terminal domain"/>
    <property type="match status" value="1"/>
</dbReference>
<dbReference type="Gene3D" id="3.90.740.10">
    <property type="entry name" value="Valyl/Leucyl/Isoleucyl-tRNA synthetase, editing domain"/>
    <property type="match status" value="1"/>
</dbReference>
<dbReference type="HAMAP" id="MF_02004">
    <property type="entry name" value="Val_tRNA_synth_type1"/>
    <property type="match status" value="1"/>
</dbReference>
<dbReference type="InterPro" id="IPR001412">
    <property type="entry name" value="aa-tRNA-synth_I_CS"/>
</dbReference>
<dbReference type="InterPro" id="IPR002300">
    <property type="entry name" value="aa-tRNA-synth_Ia"/>
</dbReference>
<dbReference type="InterPro" id="IPR033705">
    <property type="entry name" value="Anticodon_Ia_Val"/>
</dbReference>
<dbReference type="InterPro" id="IPR013155">
    <property type="entry name" value="M/V/L/I-tRNA-synth_anticd-bd"/>
</dbReference>
<dbReference type="InterPro" id="IPR014729">
    <property type="entry name" value="Rossmann-like_a/b/a_fold"/>
</dbReference>
<dbReference type="InterPro" id="IPR010978">
    <property type="entry name" value="tRNA-bd_arm"/>
</dbReference>
<dbReference type="InterPro" id="IPR009080">
    <property type="entry name" value="tRNAsynth_Ia_anticodon-bd"/>
</dbReference>
<dbReference type="InterPro" id="IPR037118">
    <property type="entry name" value="Val-tRNA_synth_C_sf"/>
</dbReference>
<dbReference type="InterPro" id="IPR019499">
    <property type="entry name" value="Val-tRNA_synth_tRNA-bd"/>
</dbReference>
<dbReference type="InterPro" id="IPR009008">
    <property type="entry name" value="Val/Leu/Ile-tRNA-synth_edit"/>
</dbReference>
<dbReference type="InterPro" id="IPR002303">
    <property type="entry name" value="Valyl-tRNA_ligase"/>
</dbReference>
<dbReference type="NCBIfam" id="NF004349">
    <property type="entry name" value="PRK05729.1"/>
    <property type="match status" value="1"/>
</dbReference>
<dbReference type="NCBIfam" id="TIGR00422">
    <property type="entry name" value="valS"/>
    <property type="match status" value="1"/>
</dbReference>
<dbReference type="PANTHER" id="PTHR11946:SF93">
    <property type="entry name" value="VALINE--TRNA LIGASE, CHLOROPLASTIC_MITOCHONDRIAL 2"/>
    <property type="match status" value="1"/>
</dbReference>
<dbReference type="PANTHER" id="PTHR11946">
    <property type="entry name" value="VALYL-TRNA SYNTHETASES"/>
    <property type="match status" value="1"/>
</dbReference>
<dbReference type="Pfam" id="PF08264">
    <property type="entry name" value="Anticodon_1"/>
    <property type="match status" value="1"/>
</dbReference>
<dbReference type="Pfam" id="PF00133">
    <property type="entry name" value="tRNA-synt_1"/>
    <property type="match status" value="1"/>
</dbReference>
<dbReference type="Pfam" id="PF10458">
    <property type="entry name" value="Val_tRNA-synt_C"/>
    <property type="match status" value="1"/>
</dbReference>
<dbReference type="PRINTS" id="PR00986">
    <property type="entry name" value="TRNASYNTHVAL"/>
</dbReference>
<dbReference type="SUPFAM" id="SSF47323">
    <property type="entry name" value="Anticodon-binding domain of a subclass of class I aminoacyl-tRNA synthetases"/>
    <property type="match status" value="1"/>
</dbReference>
<dbReference type="SUPFAM" id="SSF52374">
    <property type="entry name" value="Nucleotidylyl transferase"/>
    <property type="match status" value="1"/>
</dbReference>
<dbReference type="SUPFAM" id="SSF46589">
    <property type="entry name" value="tRNA-binding arm"/>
    <property type="match status" value="1"/>
</dbReference>
<dbReference type="SUPFAM" id="SSF50677">
    <property type="entry name" value="ValRS/IleRS/LeuRS editing domain"/>
    <property type="match status" value="1"/>
</dbReference>
<dbReference type="PROSITE" id="PS00178">
    <property type="entry name" value="AA_TRNA_LIGASE_I"/>
    <property type="match status" value="1"/>
</dbReference>
<gene>
    <name evidence="1" type="primary">valS</name>
    <name type="ordered locus">OB2061</name>
</gene>
<accession>Q8EPN2</accession>
<feature type="chain" id="PRO_0000224521" description="Valine--tRNA ligase">
    <location>
        <begin position="1"/>
        <end position="883"/>
    </location>
</feature>
<feature type="coiled-coil region" evidence="1">
    <location>
        <begin position="813"/>
        <end position="848"/>
    </location>
</feature>
<feature type="short sequence motif" description="'HIGH' region">
    <location>
        <begin position="52"/>
        <end position="62"/>
    </location>
</feature>
<feature type="short sequence motif" description="'KMSKS' region">
    <location>
        <begin position="529"/>
        <end position="533"/>
    </location>
</feature>
<feature type="binding site" evidence="1">
    <location>
        <position position="532"/>
    </location>
    <ligand>
        <name>ATP</name>
        <dbReference type="ChEBI" id="CHEBI:30616"/>
    </ligand>
</feature>